<proteinExistence type="evidence at protein level"/>
<accession>P78362</accession>
<accession>A8MVX2</accession>
<accession>O75220</accession>
<accession>O75221</accession>
<accession>Q6NUL0</accession>
<accession>Q6V1X2</accession>
<accession>Q8IYQ3</accession>
<dbReference type="EC" id="2.7.11.1" evidence="8 12 18 21"/>
<dbReference type="EMBL" id="U88666">
    <property type="protein sequence ID" value="AAC05299.1"/>
    <property type="molecule type" value="mRNA"/>
</dbReference>
<dbReference type="EMBL" id="AC005070">
    <property type="protein sequence ID" value="AAC29140.1"/>
    <property type="molecule type" value="Genomic_DNA"/>
</dbReference>
<dbReference type="EMBL" id="AC005070">
    <property type="protein sequence ID" value="AAC29141.1"/>
    <property type="molecule type" value="Genomic_DNA"/>
</dbReference>
<dbReference type="EMBL" id="AC004884">
    <property type="status" value="NOT_ANNOTATED_CDS"/>
    <property type="molecule type" value="Genomic_DNA"/>
</dbReference>
<dbReference type="EMBL" id="AC073138">
    <property type="status" value="NOT_ANNOTATED_CDS"/>
    <property type="molecule type" value="Genomic_DNA"/>
</dbReference>
<dbReference type="EMBL" id="CH471070">
    <property type="protein sequence ID" value="EAW83359.1"/>
    <property type="molecule type" value="Genomic_DNA"/>
</dbReference>
<dbReference type="EMBL" id="BC035214">
    <property type="protein sequence ID" value="AAH35214.1"/>
    <property type="molecule type" value="mRNA"/>
</dbReference>
<dbReference type="EMBL" id="BC068547">
    <property type="protein sequence ID" value="AAH68547.1"/>
    <property type="molecule type" value="mRNA"/>
</dbReference>
<dbReference type="EMBL" id="BE781215">
    <property type="status" value="NOT_ANNOTATED_CDS"/>
    <property type="molecule type" value="mRNA"/>
</dbReference>
<dbReference type="EMBL" id="AY354201">
    <property type="protein sequence ID" value="AAQ63886.1"/>
    <property type="status" value="ALT_SEQ"/>
    <property type="molecule type" value="mRNA"/>
</dbReference>
<dbReference type="CCDS" id="CCDS34724.1">
    <molecule id="P78362-2"/>
</dbReference>
<dbReference type="CCDS" id="CCDS5735.1">
    <molecule id="P78362-1"/>
</dbReference>
<dbReference type="RefSeq" id="NP_001265202.1">
    <molecule id="P78362-1"/>
    <property type="nucleotide sequence ID" value="NM_001278273.2"/>
</dbReference>
<dbReference type="RefSeq" id="NP_001337667.1">
    <molecule id="P78362-1"/>
    <property type="nucleotide sequence ID" value="NM_001350738.2"/>
</dbReference>
<dbReference type="RefSeq" id="NP_872633.1">
    <molecule id="P78362-1"/>
    <property type="nucleotide sequence ID" value="NM_182691.3"/>
</dbReference>
<dbReference type="RefSeq" id="NP_872634.1">
    <molecule id="P78362-2"/>
    <property type="nucleotide sequence ID" value="NM_182692.3"/>
</dbReference>
<dbReference type="RefSeq" id="XP_016868055.1">
    <property type="nucleotide sequence ID" value="XM_017012566.1"/>
</dbReference>
<dbReference type="PDB" id="2X7G">
    <property type="method" value="X-ray"/>
    <property type="resolution" value="2.50 A"/>
    <property type="chains" value="A=51-688"/>
</dbReference>
<dbReference type="PDB" id="5MYV">
    <property type="method" value="X-ray"/>
    <property type="resolution" value="2.90 A"/>
    <property type="chains" value="A/B/C/D=51-688"/>
</dbReference>
<dbReference type="PDB" id="7ZKX">
    <property type="method" value="X-ray"/>
    <property type="resolution" value="2.06 A"/>
    <property type="chains" value="A=70-688"/>
</dbReference>
<dbReference type="PDBsum" id="2X7G"/>
<dbReference type="PDBsum" id="5MYV"/>
<dbReference type="PDBsum" id="7ZKX"/>
<dbReference type="EMDB" id="EMD-37634"/>
<dbReference type="EMDB" id="EMD-38062"/>
<dbReference type="SMR" id="P78362"/>
<dbReference type="BioGRID" id="112611">
    <property type="interactions" value="737"/>
</dbReference>
<dbReference type="FunCoup" id="P78362">
    <property type="interactions" value="3802"/>
</dbReference>
<dbReference type="IntAct" id="P78362">
    <property type="interactions" value="465"/>
</dbReference>
<dbReference type="MINT" id="P78362"/>
<dbReference type="STRING" id="9606.ENSP00000377262"/>
<dbReference type="BindingDB" id="P78362"/>
<dbReference type="ChEMBL" id="CHEMBL5668"/>
<dbReference type="DrugBank" id="DB00173">
    <property type="generic name" value="Adenine"/>
</dbReference>
<dbReference type="DrugBank" id="DB04395">
    <property type="generic name" value="Phosphoaminophosphonic Acid-Adenylate Ester"/>
</dbReference>
<dbReference type="DrugBank" id="DB02733">
    <property type="generic name" value="Purvalanol"/>
</dbReference>
<dbReference type="DrugCentral" id="P78362"/>
<dbReference type="MoonDB" id="P78362">
    <property type="type" value="Predicted"/>
</dbReference>
<dbReference type="GlyCosmos" id="P78362">
    <property type="glycosylation" value="1 site, 1 glycan"/>
</dbReference>
<dbReference type="GlyGen" id="P78362">
    <property type="glycosylation" value="5 sites, 1 O-linked glycan (4 sites)"/>
</dbReference>
<dbReference type="iPTMnet" id="P78362"/>
<dbReference type="PhosphoSitePlus" id="P78362"/>
<dbReference type="BioMuta" id="SRPK2"/>
<dbReference type="DMDM" id="300669676"/>
<dbReference type="CPTAC" id="CPTAC-2929"/>
<dbReference type="CPTAC" id="CPTAC-2930"/>
<dbReference type="jPOST" id="P78362"/>
<dbReference type="MassIVE" id="P78362"/>
<dbReference type="PaxDb" id="9606-ENSP00000377262"/>
<dbReference type="PeptideAtlas" id="P78362"/>
<dbReference type="ProteomicsDB" id="57591">
    <molecule id="P78362-1"/>
</dbReference>
<dbReference type="ProteomicsDB" id="57592">
    <molecule id="P78362-2"/>
</dbReference>
<dbReference type="Pumba" id="P78362"/>
<dbReference type="Antibodypedia" id="17064">
    <property type="antibodies" value="165 antibodies from 29 providers"/>
</dbReference>
<dbReference type="DNASU" id="6733"/>
<dbReference type="Ensembl" id="ENST00000357311.7">
    <molecule id="P78362-1"/>
    <property type="protein sequence ID" value="ENSP00000349863.3"/>
    <property type="gene ID" value="ENSG00000135250.17"/>
</dbReference>
<dbReference type="Ensembl" id="ENST00000393651.8">
    <molecule id="P78362-2"/>
    <property type="protein sequence ID" value="ENSP00000377262.3"/>
    <property type="gene ID" value="ENSG00000135250.17"/>
</dbReference>
<dbReference type="Ensembl" id="ENST00000489828.5">
    <molecule id="P78362-1"/>
    <property type="protein sequence ID" value="ENSP00000419791.1"/>
    <property type="gene ID" value="ENSG00000135250.17"/>
</dbReference>
<dbReference type="GeneID" id="6733"/>
<dbReference type="KEGG" id="hsa:6733"/>
<dbReference type="MANE-Select" id="ENST00000393651.8">
    <molecule id="P78362-2"/>
    <property type="protein sequence ID" value="ENSP00000377262.3"/>
    <property type="RefSeq nucleotide sequence ID" value="NM_182692.3"/>
    <property type="RefSeq protein sequence ID" value="NP_872634.1"/>
</dbReference>
<dbReference type="UCSC" id="uc003vct.5">
    <molecule id="P78362-1"/>
    <property type="organism name" value="human"/>
</dbReference>
<dbReference type="AGR" id="HGNC:11306"/>
<dbReference type="CTD" id="6733"/>
<dbReference type="DisGeNET" id="6733"/>
<dbReference type="GeneCards" id="SRPK2"/>
<dbReference type="HGNC" id="HGNC:11306">
    <property type="gene designation" value="SRPK2"/>
</dbReference>
<dbReference type="HPA" id="ENSG00000135250">
    <property type="expression patterns" value="Tissue enhanced (testis)"/>
</dbReference>
<dbReference type="MalaCards" id="SRPK2"/>
<dbReference type="MIM" id="602980">
    <property type="type" value="gene"/>
</dbReference>
<dbReference type="neXtProt" id="NX_P78362"/>
<dbReference type="OpenTargets" id="ENSG00000135250"/>
<dbReference type="PharmGKB" id="PA36130"/>
<dbReference type="VEuPathDB" id="HostDB:ENSG00000135250"/>
<dbReference type="eggNOG" id="KOG1290">
    <property type="taxonomic scope" value="Eukaryota"/>
</dbReference>
<dbReference type="GeneTree" id="ENSGT00940000154795"/>
<dbReference type="HOGENOM" id="CLU_000288_81_9_1"/>
<dbReference type="InParanoid" id="P78362"/>
<dbReference type="OMA" id="NHKGPNG"/>
<dbReference type="OrthoDB" id="2649at2759"/>
<dbReference type="PAN-GO" id="P78362">
    <property type="GO annotations" value="6 GO annotations based on evolutionary models"/>
</dbReference>
<dbReference type="PhylomeDB" id="P78362"/>
<dbReference type="TreeFam" id="TF105334"/>
<dbReference type="PathwayCommons" id="P78362"/>
<dbReference type="Reactome" id="R-HSA-9694631">
    <property type="pathway name" value="Maturation of nucleoprotein"/>
</dbReference>
<dbReference type="SignaLink" id="P78362"/>
<dbReference type="SIGNOR" id="P78362"/>
<dbReference type="BioGRID-ORCS" id="6733">
    <property type="hits" value="14 hits in 1162 CRISPR screens"/>
</dbReference>
<dbReference type="CD-CODE" id="FB4E32DD">
    <property type="entry name" value="Presynaptic clusters and postsynaptic densities"/>
</dbReference>
<dbReference type="ChiTaRS" id="SRPK2">
    <property type="organism name" value="human"/>
</dbReference>
<dbReference type="EvolutionaryTrace" id="P78362"/>
<dbReference type="GeneWiki" id="SRPK2"/>
<dbReference type="GenomeRNAi" id="6733"/>
<dbReference type="Pharos" id="P78362">
    <property type="development level" value="Tchem"/>
</dbReference>
<dbReference type="PRO" id="PR:P78362"/>
<dbReference type="Proteomes" id="UP000005640">
    <property type="component" value="Chromosome 7"/>
</dbReference>
<dbReference type="RNAct" id="P78362">
    <property type="molecule type" value="protein"/>
</dbReference>
<dbReference type="Bgee" id="ENSG00000135250">
    <property type="expression patterns" value="Expressed in sperm and 217 other cell types or tissues"/>
</dbReference>
<dbReference type="ExpressionAtlas" id="P78362">
    <property type="expression patterns" value="baseline and differential"/>
</dbReference>
<dbReference type="GO" id="GO:0000785">
    <property type="term" value="C:chromatin"/>
    <property type="evidence" value="ECO:0000314"/>
    <property type="project" value="UniProtKB"/>
</dbReference>
<dbReference type="GO" id="GO:0005737">
    <property type="term" value="C:cytoplasm"/>
    <property type="evidence" value="ECO:0000314"/>
    <property type="project" value="UniProtKB"/>
</dbReference>
<dbReference type="GO" id="GO:0005829">
    <property type="term" value="C:cytosol"/>
    <property type="evidence" value="ECO:0000314"/>
    <property type="project" value="HPA"/>
</dbReference>
<dbReference type="GO" id="GO:0016607">
    <property type="term" value="C:nuclear speck"/>
    <property type="evidence" value="ECO:0000314"/>
    <property type="project" value="UniProtKB"/>
</dbReference>
<dbReference type="GO" id="GO:0005730">
    <property type="term" value="C:nucleolus"/>
    <property type="evidence" value="ECO:0000314"/>
    <property type="project" value="HPA"/>
</dbReference>
<dbReference type="GO" id="GO:0005654">
    <property type="term" value="C:nucleoplasm"/>
    <property type="evidence" value="ECO:0000314"/>
    <property type="project" value="HPA"/>
</dbReference>
<dbReference type="GO" id="GO:0005634">
    <property type="term" value="C:nucleus"/>
    <property type="evidence" value="ECO:0000314"/>
    <property type="project" value="UniProtKB"/>
</dbReference>
<dbReference type="GO" id="GO:0098793">
    <property type="term" value="C:presynapse"/>
    <property type="evidence" value="ECO:0007669"/>
    <property type="project" value="Ensembl"/>
</dbReference>
<dbReference type="GO" id="GO:0071889">
    <property type="term" value="F:14-3-3 protein binding"/>
    <property type="evidence" value="ECO:0000250"/>
    <property type="project" value="BHF-UCL"/>
</dbReference>
<dbReference type="GO" id="GO:0005524">
    <property type="term" value="F:ATP binding"/>
    <property type="evidence" value="ECO:0000314"/>
    <property type="project" value="UniProtKB"/>
</dbReference>
<dbReference type="GO" id="GO:0000287">
    <property type="term" value="F:magnesium ion binding"/>
    <property type="evidence" value="ECO:0000314"/>
    <property type="project" value="UniProtKB"/>
</dbReference>
<dbReference type="GO" id="GO:0106310">
    <property type="term" value="F:protein serine kinase activity"/>
    <property type="evidence" value="ECO:0007669"/>
    <property type="project" value="RHEA"/>
</dbReference>
<dbReference type="GO" id="GO:0004674">
    <property type="term" value="F:protein serine/threonine kinase activity"/>
    <property type="evidence" value="ECO:0000314"/>
    <property type="project" value="UniProtKB"/>
</dbReference>
<dbReference type="GO" id="GO:0003723">
    <property type="term" value="F:RNA binding"/>
    <property type="evidence" value="ECO:0007005"/>
    <property type="project" value="UniProtKB"/>
</dbReference>
<dbReference type="GO" id="GO:0001525">
    <property type="term" value="P:angiogenesis"/>
    <property type="evidence" value="ECO:0000250"/>
    <property type="project" value="BHF-UCL"/>
</dbReference>
<dbReference type="GO" id="GO:0030154">
    <property type="term" value="P:cell differentiation"/>
    <property type="evidence" value="ECO:0007669"/>
    <property type="project" value="UniProtKB-KW"/>
</dbReference>
<dbReference type="GO" id="GO:0045087">
    <property type="term" value="P:innate immune response"/>
    <property type="evidence" value="ECO:0000305"/>
    <property type="project" value="BHF-UCL"/>
</dbReference>
<dbReference type="GO" id="GO:0035556">
    <property type="term" value="P:intracellular signal transduction"/>
    <property type="evidence" value="ECO:0000314"/>
    <property type="project" value="UniProtKB"/>
</dbReference>
<dbReference type="GO" id="GO:0045071">
    <property type="term" value="P:negative regulation of viral genome replication"/>
    <property type="evidence" value="ECO:0000314"/>
    <property type="project" value="BHF-UCL"/>
</dbReference>
<dbReference type="GO" id="GO:0035063">
    <property type="term" value="P:nuclear speck organization"/>
    <property type="evidence" value="ECO:0000250"/>
    <property type="project" value="BHF-UCL"/>
</dbReference>
<dbReference type="GO" id="GO:0018105">
    <property type="term" value="P:peptidyl-serine phosphorylation"/>
    <property type="evidence" value="ECO:0000316"/>
    <property type="project" value="CACAO"/>
</dbReference>
<dbReference type="GO" id="GO:0043491">
    <property type="term" value="P:phosphatidylinositol 3-kinase/protein kinase B signal transduction"/>
    <property type="evidence" value="ECO:0000250"/>
    <property type="project" value="BHF-UCL"/>
</dbReference>
<dbReference type="GO" id="GO:0045787">
    <property type="term" value="P:positive regulation of cell cycle"/>
    <property type="evidence" value="ECO:0000250"/>
    <property type="project" value="BHF-UCL"/>
</dbReference>
<dbReference type="GO" id="GO:0008284">
    <property type="term" value="P:positive regulation of cell population proliferation"/>
    <property type="evidence" value="ECO:0000314"/>
    <property type="project" value="BHF-UCL"/>
</dbReference>
<dbReference type="GO" id="GO:0010628">
    <property type="term" value="P:positive regulation of gene expression"/>
    <property type="evidence" value="ECO:0000250"/>
    <property type="project" value="BHF-UCL"/>
</dbReference>
<dbReference type="GO" id="GO:0043525">
    <property type="term" value="P:positive regulation of neuron apoptotic process"/>
    <property type="evidence" value="ECO:0000250"/>
    <property type="project" value="BHF-UCL"/>
</dbReference>
<dbReference type="GO" id="GO:0045070">
    <property type="term" value="P:positive regulation of viral genome replication"/>
    <property type="evidence" value="ECO:0000314"/>
    <property type="project" value="BHF-UCL"/>
</dbReference>
<dbReference type="GO" id="GO:0006468">
    <property type="term" value="P:protein phosphorylation"/>
    <property type="evidence" value="ECO:0000314"/>
    <property type="project" value="UniProtKB"/>
</dbReference>
<dbReference type="GO" id="GO:0062176">
    <property type="term" value="P:R-loop processing"/>
    <property type="evidence" value="ECO:0000314"/>
    <property type="project" value="UniProtKB"/>
</dbReference>
<dbReference type="GO" id="GO:0050684">
    <property type="term" value="P:regulation of mRNA processing"/>
    <property type="evidence" value="ECO:0000318"/>
    <property type="project" value="GO_Central"/>
</dbReference>
<dbReference type="GO" id="GO:0048024">
    <property type="term" value="P:regulation of mRNA splicing, via spliceosome"/>
    <property type="evidence" value="ECO:0000304"/>
    <property type="project" value="UniProtKB"/>
</dbReference>
<dbReference type="GO" id="GO:0008380">
    <property type="term" value="P:RNA splicing"/>
    <property type="evidence" value="ECO:0000314"/>
    <property type="project" value="UniProtKB"/>
</dbReference>
<dbReference type="GO" id="GO:0000245">
    <property type="term" value="P:spliceosomal complex assembly"/>
    <property type="evidence" value="ECO:0000314"/>
    <property type="project" value="UniProtKB"/>
</dbReference>
<dbReference type="DisProt" id="DP02591"/>
<dbReference type="FunFam" id="1.10.510.10:FF:000105">
    <property type="entry name" value="SRSF protein kinase 2"/>
    <property type="match status" value="1"/>
</dbReference>
<dbReference type="FunFam" id="1.10.510.10:FF:000834">
    <property type="entry name" value="SRSF protein kinase 2"/>
    <property type="match status" value="1"/>
</dbReference>
<dbReference type="FunFam" id="3.30.200.20:FF:000163">
    <property type="entry name" value="SRSF protein kinase 2 isoform X1"/>
    <property type="match status" value="1"/>
</dbReference>
<dbReference type="Gene3D" id="3.30.200.20">
    <property type="entry name" value="Phosphorylase Kinase, domain 1"/>
    <property type="match status" value="1"/>
</dbReference>
<dbReference type="Gene3D" id="1.10.510.10">
    <property type="entry name" value="Transferase(Phosphotransferase) domain 1"/>
    <property type="match status" value="2"/>
</dbReference>
<dbReference type="InterPro" id="IPR011009">
    <property type="entry name" value="Kinase-like_dom_sf"/>
</dbReference>
<dbReference type="InterPro" id="IPR000719">
    <property type="entry name" value="Prot_kinase_dom"/>
</dbReference>
<dbReference type="InterPro" id="IPR017441">
    <property type="entry name" value="Protein_kinase_ATP_BS"/>
</dbReference>
<dbReference type="InterPro" id="IPR008271">
    <property type="entry name" value="Ser/Thr_kinase_AS"/>
</dbReference>
<dbReference type="InterPro" id="IPR051334">
    <property type="entry name" value="SRPK"/>
</dbReference>
<dbReference type="PANTHER" id="PTHR47634">
    <property type="entry name" value="PROTEIN KINASE DOMAIN-CONTAINING PROTEIN-RELATED"/>
    <property type="match status" value="1"/>
</dbReference>
<dbReference type="PANTHER" id="PTHR47634:SF6">
    <property type="entry name" value="SRSF PROTEIN KINASE 2"/>
    <property type="match status" value="1"/>
</dbReference>
<dbReference type="Pfam" id="PF00069">
    <property type="entry name" value="Pkinase"/>
    <property type="match status" value="2"/>
</dbReference>
<dbReference type="SMART" id="SM00220">
    <property type="entry name" value="S_TKc"/>
    <property type="match status" value="1"/>
</dbReference>
<dbReference type="SUPFAM" id="SSF101447">
    <property type="entry name" value="Formin homology 2 domain (FH2 domain)"/>
    <property type="match status" value="1"/>
</dbReference>
<dbReference type="SUPFAM" id="SSF56112">
    <property type="entry name" value="Protein kinase-like (PK-like)"/>
    <property type="match status" value="1"/>
</dbReference>
<dbReference type="PROSITE" id="PS00107">
    <property type="entry name" value="PROTEIN_KINASE_ATP"/>
    <property type="match status" value="1"/>
</dbReference>
<dbReference type="PROSITE" id="PS50011">
    <property type="entry name" value="PROTEIN_KINASE_DOM"/>
    <property type="match status" value="1"/>
</dbReference>
<dbReference type="PROSITE" id="PS00108">
    <property type="entry name" value="PROTEIN_KINASE_ST"/>
    <property type="match status" value="1"/>
</dbReference>
<gene>
    <name evidence="25" type="primary">SRPK2</name>
</gene>
<protein>
    <recommendedName>
        <fullName>SRSF protein kinase 2</fullName>
        <ecNumber evidence="8 12 18 21">2.7.11.1</ecNumber>
    </recommendedName>
    <alternativeName>
        <fullName>SFRS protein kinase 2</fullName>
    </alternativeName>
    <alternativeName>
        <fullName>Serine/arginine-rich protein-specific kinase 2</fullName>
        <shortName>SR-protein-specific kinase 2</shortName>
    </alternativeName>
    <component>
        <recommendedName>
            <fullName>SRSF protein kinase 2 N-terminal</fullName>
        </recommendedName>
    </component>
    <component>
        <recommendedName>
            <fullName>SRSF protein kinase 2 C-terminal</fullName>
        </recommendedName>
    </component>
</protein>
<keyword id="KW-0002">3D-structure</keyword>
<keyword id="KW-0025">Alternative splicing</keyword>
<keyword id="KW-0067">ATP-binding</keyword>
<keyword id="KW-0158">Chromosome</keyword>
<keyword id="KW-0963">Cytoplasm</keyword>
<keyword id="KW-0221">Differentiation</keyword>
<keyword id="KW-0418">Kinase</keyword>
<keyword id="KW-0507">mRNA processing</keyword>
<keyword id="KW-0508">mRNA splicing</keyword>
<keyword id="KW-0547">Nucleotide-binding</keyword>
<keyword id="KW-0539">Nucleus</keyword>
<keyword id="KW-0597">Phosphoprotein</keyword>
<keyword id="KW-1267">Proteomics identification</keyword>
<keyword id="KW-1185">Reference proteome</keyword>
<keyword id="KW-0723">Serine/threonine-protein kinase</keyword>
<keyword id="KW-0808">Transferase</keyword>
<reference evidence="20 22" key="1">
    <citation type="journal article" date="1998" name="J. Cell Biol.">
        <title>SRPK2: a differentially expressed SR protein-specific kinase involved in mediating the interaction and localization of pre-mRNA splicing factors in mammalian cells.</title>
        <authorList>
            <person name="Wang H.-Y."/>
            <person name="Lin W."/>
            <person name="Dyck J.A."/>
            <person name="Yeakley J.M."/>
            <person name="Songyang Z."/>
            <person name="Cantley L.C."/>
            <person name="Fu X.-D."/>
        </authorList>
    </citation>
    <scope>NUCLEOTIDE SEQUENCE [MRNA] (ISOFORM 1)</scope>
    <scope>FUNCTION</scope>
    <scope>CATALYTIC ACTIVITY</scope>
    <scope>COFACTOR</scope>
    <scope>TISSUE SPECIFICITY</scope>
    <scope>SUBCELLULAR LOCATION</scope>
    <source>
        <tissue evidence="18">Fetal brain</tissue>
    </source>
</reference>
<reference evidence="23" key="2">
    <citation type="journal article" date="2003" name="Nature">
        <title>The DNA sequence of human chromosome 7.</title>
        <authorList>
            <person name="Hillier L.W."/>
            <person name="Fulton R.S."/>
            <person name="Fulton L.A."/>
            <person name="Graves T.A."/>
            <person name="Pepin K.H."/>
            <person name="Wagner-McPherson C."/>
            <person name="Layman D."/>
            <person name="Maas J."/>
            <person name="Jaeger S."/>
            <person name="Walker R."/>
            <person name="Wylie K."/>
            <person name="Sekhon M."/>
            <person name="Becker M.C."/>
            <person name="O'Laughlin M.D."/>
            <person name="Schaller M.E."/>
            <person name="Fewell G.A."/>
            <person name="Delehaunty K.D."/>
            <person name="Miner T.L."/>
            <person name="Nash W.E."/>
            <person name="Cordes M."/>
            <person name="Du H."/>
            <person name="Sun H."/>
            <person name="Edwards J."/>
            <person name="Bradshaw-Cordum H."/>
            <person name="Ali J."/>
            <person name="Andrews S."/>
            <person name="Isak A."/>
            <person name="Vanbrunt A."/>
            <person name="Nguyen C."/>
            <person name="Du F."/>
            <person name="Lamar B."/>
            <person name="Courtney L."/>
            <person name="Kalicki J."/>
            <person name="Ozersky P."/>
            <person name="Bielicki L."/>
            <person name="Scott K."/>
            <person name="Holmes A."/>
            <person name="Harkins R."/>
            <person name="Harris A."/>
            <person name="Strong C.M."/>
            <person name="Hou S."/>
            <person name="Tomlinson C."/>
            <person name="Dauphin-Kohlberg S."/>
            <person name="Kozlowicz-Reilly A."/>
            <person name="Leonard S."/>
            <person name="Rohlfing T."/>
            <person name="Rock S.M."/>
            <person name="Tin-Wollam A.-M."/>
            <person name="Abbott A."/>
            <person name="Minx P."/>
            <person name="Maupin R."/>
            <person name="Strowmatt C."/>
            <person name="Latreille P."/>
            <person name="Miller N."/>
            <person name="Johnson D."/>
            <person name="Murray J."/>
            <person name="Woessner J.P."/>
            <person name="Wendl M.C."/>
            <person name="Yang S.-P."/>
            <person name="Schultz B.R."/>
            <person name="Wallis J.W."/>
            <person name="Spieth J."/>
            <person name="Bieri T.A."/>
            <person name="Nelson J.O."/>
            <person name="Berkowicz N."/>
            <person name="Wohldmann P.E."/>
            <person name="Cook L.L."/>
            <person name="Hickenbotham M.T."/>
            <person name="Eldred J."/>
            <person name="Williams D."/>
            <person name="Bedell J.A."/>
            <person name="Mardis E.R."/>
            <person name="Clifton S.W."/>
            <person name="Chissoe S.L."/>
            <person name="Marra M.A."/>
            <person name="Raymond C."/>
            <person name="Haugen E."/>
            <person name="Gillett W."/>
            <person name="Zhou Y."/>
            <person name="James R."/>
            <person name="Phelps K."/>
            <person name="Iadanoto S."/>
            <person name="Bubb K."/>
            <person name="Simms E."/>
            <person name="Levy R."/>
            <person name="Clendenning J."/>
            <person name="Kaul R."/>
            <person name="Kent W.J."/>
            <person name="Furey T.S."/>
            <person name="Baertsch R.A."/>
            <person name="Brent M.R."/>
            <person name="Keibler E."/>
            <person name="Flicek P."/>
            <person name="Bork P."/>
            <person name="Suyama M."/>
            <person name="Bailey J.A."/>
            <person name="Portnoy M.E."/>
            <person name="Torrents D."/>
            <person name="Chinwalla A.T."/>
            <person name="Gish W.R."/>
            <person name="Eddy S.R."/>
            <person name="McPherson J.D."/>
            <person name="Olson M.V."/>
            <person name="Eichler E.E."/>
            <person name="Green E.D."/>
            <person name="Waterston R.H."/>
            <person name="Wilson R.K."/>
        </authorList>
    </citation>
    <scope>NUCLEOTIDE SEQUENCE [LARGE SCALE GENOMIC DNA]</scope>
</reference>
<reference evidence="26" key="3">
    <citation type="submission" date="2005-07" db="EMBL/GenBank/DDBJ databases">
        <authorList>
            <person name="Mural R.J."/>
            <person name="Istrail S."/>
            <person name="Sutton G.G."/>
            <person name="Florea L."/>
            <person name="Halpern A.L."/>
            <person name="Mobarry C.M."/>
            <person name="Lippert R."/>
            <person name="Walenz B."/>
            <person name="Shatkay H."/>
            <person name="Dew I."/>
            <person name="Miller J.R."/>
            <person name="Flanigan M.J."/>
            <person name="Edwards N.J."/>
            <person name="Bolanos R."/>
            <person name="Fasulo D."/>
            <person name="Halldorsson B.V."/>
            <person name="Hannenhalli S."/>
            <person name="Turner R."/>
            <person name="Yooseph S."/>
            <person name="Lu F."/>
            <person name="Nusskern D.R."/>
            <person name="Shue B.C."/>
            <person name="Zheng X.H."/>
            <person name="Zhong F."/>
            <person name="Delcher A.L."/>
            <person name="Huson D.H."/>
            <person name="Kravitz S.A."/>
            <person name="Mouchard L."/>
            <person name="Reinert K."/>
            <person name="Remington K.A."/>
            <person name="Clark A.G."/>
            <person name="Waterman M.S."/>
            <person name="Eichler E.E."/>
            <person name="Adams M.D."/>
            <person name="Hunkapiller M.W."/>
            <person name="Myers E.W."/>
            <person name="Venter J.C."/>
        </authorList>
    </citation>
    <scope>NUCLEOTIDE SEQUENCE [LARGE SCALE GENOMIC DNA]</scope>
</reference>
<reference evidence="24" key="4">
    <citation type="journal article" date="2004" name="Genome Res.">
        <title>The status, quality, and expansion of the NIH full-length cDNA project: the Mammalian Gene Collection (MGC).</title>
        <authorList>
            <consortium name="The MGC Project Team"/>
        </authorList>
    </citation>
    <scope>NUCLEOTIDE SEQUENCE [LARGE SCALE MRNA] (ISOFORM 1)</scope>
    <scope>NUCLEOTIDE SEQUENCE [MRNA] OF 1-99 (ISOFORM 2)</scope>
    <source>
        <tissue>Retinoblastoma</tissue>
        <tissue evidence="24">Skin</tissue>
        <tissue evidence="25">Testis</tissue>
    </source>
</reference>
<reference evidence="26" key="5">
    <citation type="submission" date="2003-07" db="EMBL/GenBank/DDBJ databases">
        <authorList>
            <person name="Sha J.H."/>
            <person name="Zhou Z.M."/>
            <person name="Li J.M."/>
        </authorList>
    </citation>
    <scope>NUCLEOTIDE SEQUENCE [MRNA] OF 1-537 (ISOFORM 1)</scope>
    <source>
        <tissue evidence="26">Testis</tissue>
    </source>
</reference>
<reference evidence="20" key="6">
    <citation type="journal article" date="2002" name="J. Virol.">
        <title>Identification of SRPK1 and SRPK2 as the major cellular protein kinases phosphorylating hepatitis B virus core protein.</title>
        <authorList>
            <person name="Daub H."/>
            <person name="Blencke S."/>
            <person name="Habenberger P."/>
            <person name="Kurtenbach A."/>
            <person name="Dennenmoser J."/>
            <person name="Wissing J."/>
            <person name="Ullrich A."/>
            <person name="Cotten M."/>
        </authorList>
    </citation>
    <scope>FUNCTION IN PHOSPHORYLATION OF HEPATITIS B VIRUS CORE PROTEIN</scope>
    <scope>CATALYTIC ACTIVITY</scope>
    <scope>COFACTOR</scope>
</reference>
<reference key="7">
    <citation type="journal article" date="2004" name="Anal. Chem.">
        <title>Robust phosphoproteomic profiling of tyrosine phosphorylation sites from human T cells using immobilized metal affinity chromatography and tandem mass spectrometry.</title>
        <authorList>
            <person name="Brill L.M."/>
            <person name="Salomon A.R."/>
            <person name="Ficarro S.B."/>
            <person name="Mukherji M."/>
            <person name="Stettler-Gill M."/>
            <person name="Peters E.C."/>
        </authorList>
    </citation>
    <scope>IDENTIFICATION BY MASS SPECTROMETRY [LARGE SCALE ANALYSIS]</scope>
    <source>
        <tissue>Leukemic T-cell</tissue>
    </source>
</reference>
<reference key="8">
    <citation type="journal article" date="2005" name="Virology">
        <title>Suppression of hepatitis B virus replication by SRPK1 and SRPK2 via a pathway independent of the phosphorylation of the viral core protein.</title>
        <authorList>
            <person name="Zheng Y."/>
            <person name="Fu X.D."/>
            <person name="Ou J.H."/>
        </authorList>
    </citation>
    <scope>FUNCTION IN NEGATIVE REGULATION OF HEPATITIS B VIRUS (HBV) REPLICATION</scope>
</reference>
<reference key="9">
    <citation type="journal article" date="2006" name="Nat. Biotechnol.">
        <title>A probability-based approach for high-throughput protein phosphorylation analysis and site localization.</title>
        <authorList>
            <person name="Beausoleil S.A."/>
            <person name="Villen J."/>
            <person name="Gerber S.A."/>
            <person name="Rush J."/>
            <person name="Gygi S.P."/>
        </authorList>
    </citation>
    <scope>PHOSPHORYLATION [LARGE SCALE ANALYSIS] AT SER-497</scope>
    <scope>IDENTIFICATION BY MASS SPECTROMETRY [LARGE SCALE ANALYSIS]</scope>
    <source>
        <tissue>Cervix carcinoma</tissue>
    </source>
</reference>
<reference key="10">
    <citation type="journal article" date="2008" name="Cancer Res.">
        <title>Serine/arginine protein-specific kinase 2 promotes leukemia cell proliferation by phosphorylating acinus and regulating cyclin A1.</title>
        <authorList>
            <person name="Jang S.W."/>
            <person name="Yang S.J."/>
            <person name="Ehlen A."/>
            <person name="Dong S."/>
            <person name="Khoury H."/>
            <person name="Chen J."/>
            <person name="Persson J.L."/>
            <person name="Ye K."/>
        </authorList>
    </citation>
    <scope>FUNCTION IN PHOSPHORYLATION OF ACIN1</scope>
    <scope>CATALYTIC ACTIVITY</scope>
    <scope>INTERACTION WITH ACIN1</scope>
</reference>
<reference key="11">
    <citation type="journal article" date="2008" name="Mol. Cell">
        <title>Kinase-selective enrichment enables quantitative phosphoproteomics of the kinome across the cell cycle.</title>
        <authorList>
            <person name="Daub H."/>
            <person name="Olsen J.V."/>
            <person name="Bairlein M."/>
            <person name="Gnad F."/>
            <person name="Oppermann F.S."/>
            <person name="Korner R."/>
            <person name="Greff Z."/>
            <person name="Keri G."/>
            <person name="Stemmann O."/>
            <person name="Mann M."/>
        </authorList>
    </citation>
    <scope>PHOSPHORYLATION [LARGE SCALE ANALYSIS] AT SER-380</scope>
    <scope>IDENTIFICATION BY MASS SPECTROMETRY [LARGE SCALE ANALYSIS]</scope>
    <source>
        <tissue>Cervix carcinoma</tissue>
    </source>
</reference>
<reference key="12">
    <citation type="journal article" date="2008" name="Nat. Struct. Mol. Biol.">
        <title>Phosphorylation of human PRP28 by SRPK2 is required for integration of the U4/U6-U5 tri-snRNP into the spliceosome.</title>
        <authorList>
            <person name="Mathew R."/>
            <person name="Hartmuth K."/>
            <person name="Moehlmann S."/>
            <person name="Urlaub H."/>
            <person name="Ficner R."/>
            <person name="Luehrmann R."/>
        </authorList>
    </citation>
    <scope>FUNCTION IN PHOSPHORYLATION OF DDX23/PRP28</scope>
    <scope>ASSOCIATION WITH U4/U6-U5 TRI-SNRNPS</scope>
</reference>
<reference key="13">
    <citation type="journal article" date="2008" name="Proc. Natl. Acad. Sci. U.S.A.">
        <title>A quantitative atlas of mitotic phosphorylation.</title>
        <authorList>
            <person name="Dephoure N."/>
            <person name="Zhou C."/>
            <person name="Villen J."/>
            <person name="Beausoleil S.A."/>
            <person name="Bakalarski C.E."/>
            <person name="Elledge S.J."/>
            <person name="Gygi S.P."/>
        </authorList>
    </citation>
    <scope>PHOSPHORYLATION [LARGE SCALE ANALYSIS] AT SER-494 AND SER-497</scope>
    <scope>IDENTIFICATION BY MASS SPECTROMETRY [LARGE SCALE ANALYSIS]</scope>
    <source>
        <tissue>Cervix carcinoma</tissue>
    </source>
</reference>
<reference key="14">
    <citation type="journal article" date="2009" name="Anal. Chem.">
        <title>Lys-N and trypsin cover complementary parts of the phosphoproteome in a refined SCX-based approach.</title>
        <authorList>
            <person name="Gauci S."/>
            <person name="Helbig A.O."/>
            <person name="Slijper M."/>
            <person name="Krijgsveld J."/>
            <person name="Heck A.J."/>
            <person name="Mohammed S."/>
        </authorList>
    </citation>
    <scope>IDENTIFICATION BY MASS SPECTROMETRY [LARGE SCALE ANALYSIS]</scope>
</reference>
<reference key="15">
    <citation type="journal article" date="2009" name="J. Biol. Chem.">
        <title>Interaction of Akt-phosphorylated SRPK2 with 14-3-3 mediates cell cycle and cell death in neurons.</title>
        <authorList>
            <person name="Jang S.W."/>
            <person name="Liu X."/>
            <person name="Fu H."/>
            <person name="Rees H."/>
            <person name="Yepes M."/>
            <person name="Levey A."/>
            <person name="Ye K."/>
        </authorList>
    </citation>
    <scope>FUNCTION</scope>
    <scope>INTERACTION WITH AKT1; YWHAB; YWHAE AND SFN</scope>
    <scope>SUBCELLULAR LOCATION</scope>
    <scope>PHOSPHORYLATION AT THR-492</scope>
</reference>
<reference key="16">
    <citation type="journal article" date="2009" name="Sci. Signal.">
        <title>Quantitative phosphoproteomic analysis of T cell receptor signaling reveals system-wide modulation of protein-protein interactions.</title>
        <authorList>
            <person name="Mayya V."/>
            <person name="Lundgren D.H."/>
            <person name="Hwang S.-I."/>
            <person name="Rezaul K."/>
            <person name="Wu L."/>
            <person name="Eng J.K."/>
            <person name="Rodionov V."/>
            <person name="Han D.K."/>
        </authorList>
    </citation>
    <scope>IDENTIFICATION BY MASS SPECTROMETRY [LARGE SCALE ANALYSIS]</scope>
    <source>
        <tissue>Leukemic T-cell</tissue>
    </source>
</reference>
<reference key="17">
    <citation type="journal article" date="2010" name="Sci. Signal.">
        <title>Quantitative phosphoproteomics reveals widespread full phosphorylation site occupancy during mitosis.</title>
        <authorList>
            <person name="Olsen J.V."/>
            <person name="Vermeulen M."/>
            <person name="Santamaria A."/>
            <person name="Kumar C."/>
            <person name="Miller M.L."/>
            <person name="Jensen L.J."/>
            <person name="Gnad F."/>
            <person name="Cox J."/>
            <person name="Jensen T.S."/>
            <person name="Nigg E.A."/>
            <person name="Brunak S."/>
            <person name="Mann M."/>
        </authorList>
    </citation>
    <scope>PHOSPHORYLATION [LARGE SCALE ANALYSIS] AT SER-380; SER-494 AND SER-497</scope>
    <scope>IDENTIFICATION BY MASS SPECTROMETRY [LARGE SCALE ANALYSIS]</scope>
    <source>
        <tissue>Cervix carcinoma</tissue>
    </source>
</reference>
<reference key="18">
    <citation type="journal article" date="2011" name="BMC Syst. Biol.">
        <title>Initial characterization of the human central proteome.</title>
        <authorList>
            <person name="Burkard T.R."/>
            <person name="Planyavsky M."/>
            <person name="Kaupe I."/>
            <person name="Breitwieser F.P."/>
            <person name="Buerckstuemmer T."/>
            <person name="Bennett K.L."/>
            <person name="Superti-Furga G."/>
            <person name="Colinge J."/>
        </authorList>
    </citation>
    <scope>IDENTIFICATION BY MASS SPECTROMETRY [LARGE SCALE ANALYSIS]</scope>
</reference>
<reference key="19">
    <citation type="journal article" date="2011" name="EMBO J.">
        <title>Acetylation and phosphorylation of SRSF2 control cell fate decision in response to cisplatin.</title>
        <authorList>
            <person name="Edmond V."/>
            <person name="Moysan E."/>
            <person name="Khochbin S."/>
            <person name="Matthias P."/>
            <person name="Brambilla C."/>
            <person name="Brambilla E."/>
            <person name="Gazzeri S."/>
            <person name="Eymin B."/>
        </authorList>
    </citation>
    <scope>FUNCTION IN PHOSPHORYLATION OF SRSF2</scope>
    <scope>CATALYTIC ACTIVITY</scope>
    <scope>SUBCELLULAR LOCATION</scope>
</reference>
<reference key="20">
    <citation type="journal article" date="2011" name="FEBS J.">
        <title>Serine-arginine protein kinases: a small protein kinase family with a large cellular presence.</title>
        <authorList>
            <person name="Giannakouros T."/>
            <person name="Nikolakaki E."/>
            <person name="Mylonis I."/>
            <person name="Georgatsou E."/>
        </authorList>
    </citation>
    <scope>REVIEW ON FUNCTION</scope>
</reference>
<reference key="21">
    <citation type="journal article" date="2011" name="J. Biol. Chem.">
        <title>The N-terminal fragment from caspase-cleaved serine/arginine protein-specific kinase2 (SRPK2) translocates into the nucleus and promotes apoptosis.</title>
        <authorList>
            <person name="Hong Y."/>
            <person name="Jang S.W."/>
            <person name="Ye K."/>
        </authorList>
    </citation>
    <scope>FUNCTION</scope>
    <scope>CATALYTIC ACTIVITY</scope>
    <scope>PROTEOLYTIC CLEAVAGE AT ASP-139 AND ASP-403 BY CASPASE-3</scope>
    <scope>SUBCELLULAR LOCATION</scope>
</reference>
<reference key="22">
    <citation type="journal article" date="2011" name="Sci. Signal.">
        <title>System-wide temporal characterization of the proteome and phosphoproteome of human embryonic stem cell differentiation.</title>
        <authorList>
            <person name="Rigbolt K.T."/>
            <person name="Prokhorova T.A."/>
            <person name="Akimov V."/>
            <person name="Henningsen J."/>
            <person name="Johansen P.T."/>
            <person name="Kratchmarova I."/>
            <person name="Kassem M."/>
            <person name="Mann M."/>
            <person name="Olsen J.V."/>
            <person name="Blagoev B."/>
        </authorList>
    </citation>
    <scope>PHOSPHORYLATION [LARGE SCALE ANALYSIS] AT SER-494 AND SER-497</scope>
    <scope>IDENTIFICATION BY MASS SPECTROMETRY [LARGE SCALE ANALYSIS]</scope>
</reference>
<reference key="23">
    <citation type="journal article" date="2013" name="J. Proteome Res.">
        <title>Toward a comprehensive characterization of a human cancer cell phosphoproteome.</title>
        <authorList>
            <person name="Zhou H."/>
            <person name="Di Palma S."/>
            <person name="Preisinger C."/>
            <person name="Peng M."/>
            <person name="Polat A.N."/>
            <person name="Heck A.J."/>
            <person name="Mohammed S."/>
        </authorList>
    </citation>
    <scope>PHOSPHORYLATION [LARGE SCALE ANALYSIS] AT SER-494</scope>
    <scope>IDENTIFICATION BY MASS SPECTROMETRY [LARGE SCALE ANALYSIS]</scope>
    <source>
        <tissue>Cervix carcinoma</tissue>
        <tissue>Erythroleukemia</tissue>
    </source>
</reference>
<reference key="24">
    <citation type="journal article" date="2014" name="J. Proteomics">
        <title>An enzyme assisted RP-RPLC approach for in-depth analysis of human liver phosphoproteome.</title>
        <authorList>
            <person name="Bian Y."/>
            <person name="Song C."/>
            <person name="Cheng K."/>
            <person name="Dong M."/>
            <person name="Wang F."/>
            <person name="Huang J."/>
            <person name="Sun D."/>
            <person name="Wang L."/>
            <person name="Ye M."/>
            <person name="Zou H."/>
        </authorList>
    </citation>
    <scope>PHOSPHORYLATION [LARGE SCALE ANALYSIS] AT SER-52; SER-380 AND SER-497</scope>
    <scope>IDENTIFICATION BY MASS SPECTROMETRY [LARGE SCALE ANALYSIS]</scope>
    <source>
        <tissue>Liver</tissue>
    </source>
</reference>
<reference key="25">
    <citation type="journal article" date="2017" name="Cell Rep.">
        <title>Transcription Dynamics Prevent RNA-Mediated Genomic Instability through SRPK2-Dependent DDX23 Phosphorylation.</title>
        <authorList>
            <person name="Sridhara S.C."/>
            <person name="Carvalho S."/>
            <person name="Grosso A.R."/>
            <person name="Gallego-Paez L.M."/>
            <person name="Carmo-Fonseca M."/>
            <person name="de Almeida S.F."/>
        </authorList>
    </citation>
    <scope>FUNCTION</scope>
    <scope>INTERACTION WITH POLR2A</scope>
    <scope>SUBCELLULAR LOCATION</scope>
</reference>
<reference key="26">
    <citation type="journal article" date="2007" name="Nature">
        <title>Patterns of somatic mutation in human cancer genomes.</title>
        <authorList>
            <person name="Greenman C."/>
            <person name="Stephens P."/>
            <person name="Smith R."/>
            <person name="Dalgliesh G.L."/>
            <person name="Hunter C."/>
            <person name="Bignell G."/>
            <person name="Davies H."/>
            <person name="Teague J."/>
            <person name="Butler A."/>
            <person name="Stevens C."/>
            <person name="Edkins S."/>
            <person name="O'Meara S."/>
            <person name="Vastrik I."/>
            <person name="Schmidt E.E."/>
            <person name="Avis T."/>
            <person name="Barthorpe S."/>
            <person name="Bhamra G."/>
            <person name="Buck G."/>
            <person name="Choudhury B."/>
            <person name="Clements J."/>
            <person name="Cole J."/>
            <person name="Dicks E."/>
            <person name="Forbes S."/>
            <person name="Gray K."/>
            <person name="Halliday K."/>
            <person name="Harrison R."/>
            <person name="Hills K."/>
            <person name="Hinton J."/>
            <person name="Jenkinson A."/>
            <person name="Jones D."/>
            <person name="Menzies A."/>
            <person name="Mironenko T."/>
            <person name="Perry J."/>
            <person name="Raine K."/>
            <person name="Richardson D."/>
            <person name="Shepherd R."/>
            <person name="Small A."/>
            <person name="Tofts C."/>
            <person name="Varian J."/>
            <person name="Webb T."/>
            <person name="West S."/>
            <person name="Widaa S."/>
            <person name="Yates A."/>
            <person name="Cahill D.P."/>
            <person name="Louis D.N."/>
            <person name="Goldstraw P."/>
            <person name="Nicholson A.G."/>
            <person name="Brasseur F."/>
            <person name="Looijenga L."/>
            <person name="Weber B.L."/>
            <person name="Chiew Y.-E."/>
            <person name="DeFazio A."/>
            <person name="Greaves M.F."/>
            <person name="Green A.R."/>
            <person name="Campbell P."/>
            <person name="Birney E."/>
            <person name="Easton D.F."/>
            <person name="Chenevix-Trench G."/>
            <person name="Tan M.-H."/>
            <person name="Khoo S.K."/>
            <person name="Teh B.T."/>
            <person name="Yuen S.T."/>
            <person name="Leung S.Y."/>
            <person name="Wooster R."/>
            <person name="Futreal P.A."/>
            <person name="Stratton M.R."/>
        </authorList>
    </citation>
    <scope>VARIANTS [LARGE SCALE ANALYSIS] LEU-43; ASP-243; PRO-426; PHE-486 AND THR-515</scope>
</reference>
<organism>
    <name type="scientific">Homo sapiens</name>
    <name type="common">Human</name>
    <dbReference type="NCBI Taxonomy" id="9606"/>
    <lineage>
        <taxon>Eukaryota</taxon>
        <taxon>Metazoa</taxon>
        <taxon>Chordata</taxon>
        <taxon>Craniata</taxon>
        <taxon>Vertebrata</taxon>
        <taxon>Euteleostomi</taxon>
        <taxon>Mammalia</taxon>
        <taxon>Eutheria</taxon>
        <taxon>Euarchontoglires</taxon>
        <taxon>Primates</taxon>
        <taxon>Haplorrhini</taxon>
        <taxon>Catarrhini</taxon>
        <taxon>Hominidae</taxon>
        <taxon>Homo</taxon>
    </lineage>
</organism>
<evidence type="ECO:0000250" key="1"/>
<evidence type="ECO:0000250" key="2">
    <source>
        <dbReference type="UniProtKB" id="O54781"/>
    </source>
</evidence>
<evidence type="ECO:0000250" key="3">
    <source>
        <dbReference type="UniProtKB" id="Q96SB4"/>
    </source>
</evidence>
<evidence type="ECO:0000250" key="4">
    <source>
        <dbReference type="UniProtKB" id="Q9UPE1"/>
    </source>
</evidence>
<evidence type="ECO:0000255" key="5">
    <source>
        <dbReference type="PROSITE-ProRule" id="PRU00159"/>
    </source>
</evidence>
<evidence type="ECO:0000255" key="6">
    <source>
        <dbReference type="PROSITE-ProRule" id="PRU10027"/>
    </source>
</evidence>
<evidence type="ECO:0000256" key="7">
    <source>
        <dbReference type="SAM" id="MobiDB-lite"/>
    </source>
</evidence>
<evidence type="ECO:0000269" key="8">
    <source>
    </source>
</evidence>
<evidence type="ECO:0000269" key="9">
    <source>
    </source>
</evidence>
<evidence type="ECO:0000269" key="10">
    <source>
    </source>
</evidence>
<evidence type="ECO:0000269" key="11">
    <source>
    </source>
</evidence>
<evidence type="ECO:0000269" key="12">
    <source>
    </source>
</evidence>
<evidence type="ECO:0000269" key="13">
    <source>
    </source>
</evidence>
<evidence type="ECO:0000269" key="14">
    <source>
    </source>
</evidence>
<evidence type="ECO:0000269" key="15">
    <source>
    </source>
</evidence>
<evidence type="ECO:0000269" key="16">
    <source>
    </source>
</evidence>
<evidence type="ECO:0000269" key="17">
    <source>
    </source>
</evidence>
<evidence type="ECO:0000269" key="18">
    <source>
    </source>
</evidence>
<evidence type="ECO:0000303" key="19">
    <source>
    </source>
</evidence>
<evidence type="ECO:0000305" key="20"/>
<evidence type="ECO:0000305" key="21">
    <source>
    </source>
</evidence>
<evidence type="ECO:0000312" key="22">
    <source>
        <dbReference type="EMBL" id="AAC05299.1"/>
    </source>
</evidence>
<evidence type="ECO:0000312" key="23">
    <source>
        <dbReference type="EMBL" id="AAC29141.1"/>
    </source>
</evidence>
<evidence type="ECO:0000312" key="24">
    <source>
        <dbReference type="EMBL" id="AAH35214.1"/>
    </source>
</evidence>
<evidence type="ECO:0000312" key="25">
    <source>
        <dbReference type="EMBL" id="AAH68547.1"/>
    </source>
</evidence>
<evidence type="ECO:0000312" key="26">
    <source>
        <dbReference type="EMBL" id="AAQ63886.1"/>
    </source>
</evidence>
<evidence type="ECO:0007744" key="27">
    <source>
    </source>
</evidence>
<evidence type="ECO:0007744" key="28">
    <source>
    </source>
</evidence>
<evidence type="ECO:0007744" key="29">
    <source>
    </source>
</evidence>
<evidence type="ECO:0007744" key="30">
    <source>
    </source>
</evidence>
<evidence type="ECO:0007744" key="31">
    <source>
    </source>
</evidence>
<evidence type="ECO:0007744" key="32">
    <source>
    </source>
</evidence>
<evidence type="ECO:0007744" key="33">
    <source>
    </source>
</evidence>
<evidence type="ECO:0007829" key="34">
    <source>
        <dbReference type="PDB" id="7ZKX"/>
    </source>
</evidence>
<name>SRPK2_HUMAN</name>
<comment type="function">
    <text evidence="8 9 11 12 13 14 16 17 18">Serine/arginine-rich protein-specific kinase which specifically phosphorylates its substrates at serine residues located in regions rich in arginine/serine dipeptides, known as RS domains and is involved in the phosphorylation of SR splicing factors and the regulation of splicing (PubMed:18559500, PubMed:21056976, PubMed:9472028). Promotes neuronal apoptosis by up-regulating cyclin-D1 (CCND1) expression (PubMed:19592491). This is done by the phosphorylation of SRSF2, leading to the suppression of p53/TP53 phosphorylation thereby relieving the repressive effect of p53/TP53 on cyclin-D1 (CCND1) expression (PubMed:21205200). Phosphorylates ACIN1, and redistributes it from the nuclear speckles to the nucleoplasm, resulting in cyclin A1 but not cyclin A2 up-regulation (PubMed:18559500). Plays an essential role in spliceosomal B complex formation via the phosphorylation of DDX23/PRP28 (PubMed:18425142). Probably by phosphorylating DDX23, leads to the suppression of incorrect R-loops formed during transcription; R-loops are composed of a DNA:RNA hybrid and the associated non-template single-stranded DNA (PubMed:28076779). Can mediate hepatitis B virus (HBV) core protein phosphorylation (PubMed:12134018). Plays a negative role in the regulation of HBV replication through a mechanism not involving the phosphorylation of the core protein but by reducing the packaging efficiency of the pregenomic RNA (pgRNA) without affecting the formation of the viral core particles (PubMed:16122776).</text>
</comment>
<comment type="catalytic activity">
    <reaction evidence="8 12 18 21">
        <text>L-seryl-[protein] + ATP = O-phospho-L-seryl-[protein] + ADP + H(+)</text>
        <dbReference type="Rhea" id="RHEA:17989"/>
        <dbReference type="Rhea" id="RHEA-COMP:9863"/>
        <dbReference type="Rhea" id="RHEA-COMP:11604"/>
        <dbReference type="ChEBI" id="CHEBI:15378"/>
        <dbReference type="ChEBI" id="CHEBI:29999"/>
        <dbReference type="ChEBI" id="CHEBI:30616"/>
        <dbReference type="ChEBI" id="CHEBI:83421"/>
        <dbReference type="ChEBI" id="CHEBI:456216"/>
        <dbReference type="EC" id="2.7.11.1"/>
    </reaction>
</comment>
<comment type="catalytic activity">
    <reaction evidence="8 18 21">
        <text>L-threonyl-[protein] + ATP = O-phospho-L-threonyl-[protein] + ADP + H(+)</text>
        <dbReference type="Rhea" id="RHEA:46608"/>
        <dbReference type="Rhea" id="RHEA-COMP:11060"/>
        <dbReference type="Rhea" id="RHEA-COMP:11605"/>
        <dbReference type="ChEBI" id="CHEBI:15378"/>
        <dbReference type="ChEBI" id="CHEBI:30013"/>
        <dbReference type="ChEBI" id="CHEBI:30616"/>
        <dbReference type="ChEBI" id="CHEBI:61977"/>
        <dbReference type="ChEBI" id="CHEBI:456216"/>
        <dbReference type="EC" id="2.7.11.1"/>
    </reaction>
</comment>
<comment type="cofactor">
    <cofactor evidence="8 18">
        <name>Mg(2+)</name>
        <dbReference type="ChEBI" id="CHEBI:18420"/>
    </cofactor>
</comment>
<comment type="activity regulation">
    <text evidence="3">Activated by phosphorylation on Ser-52 and Ser-588.</text>
</comment>
<comment type="subunit">
    <text evidence="11 12 13 17">Associates with U4/U6-U5 tri-small nuclear ribonucleoproteins (U4/U6-U5 tri-snRNPs) (PubMed:18425142). Interacts with PKB/AKT1 in a phosphorylation-dependent manner (PubMed:19592491). The phosphorylated form (by PKB/AKT1) interacts with YWHAB and YWHAE (PubMed:19592491). Interaction with YWHAB suppresses its cleavage by caspases and inhibits the release of its N-terminal pro-apoptotic fragment (PubMed:19592491). Interacts with SFN (PubMed:19592491). Interacts with ACIN1 (PubMed:18559500). Interacts with POLR2A/RNA polymerase II; the interaction occurs during the co-transcriptional formation of inappropriate R-loops (PubMed:28076779).</text>
</comment>
<comment type="interaction">
    <interactant intactId="EBI-593303">
        <id>P78362</id>
    </interactant>
    <interactant intactId="EBI-396258">
        <id>Q9UKV3</id>
        <label>ACIN1</label>
    </interactant>
    <organismsDiffer>false</organismsDiffer>
    <experiments>3</experiments>
</comment>
<comment type="interaction">
    <interactant intactId="EBI-593303">
        <id>P78362</id>
    </interactant>
    <interactant intactId="EBI-2808785">
        <id>Q9NWB6</id>
        <label>ARGLU1</label>
    </interactant>
    <organismsDiffer>false</organismsDiffer>
    <experiments>3</experiments>
</comment>
<comment type="interaction">
    <interactant intactId="EBI-593303">
        <id>P78362</id>
    </interactant>
    <interactant intactId="EBI-2683099">
        <id>Q66PJ3</id>
        <label>ARL6IP4</label>
    </interactant>
    <organismsDiffer>false</organismsDiffer>
    <experiments>2</experiments>
</comment>
<comment type="interaction">
    <interactant intactId="EBI-593303">
        <id>P78362</id>
    </interactant>
    <interactant intactId="EBI-1245958">
        <id>P50613</id>
        <label>CDK7</label>
    </interactant>
    <organismsDiffer>false</organismsDiffer>
    <experiments>2</experiments>
</comment>
<comment type="interaction">
    <interactant intactId="EBI-593303">
        <id>P78362</id>
    </interactant>
    <interactant intactId="EBI-347794">
        <id>Q9Y3Y2</id>
        <label>CHTOP</label>
    </interactant>
    <organismsDiffer>false</organismsDiffer>
    <experiments>2</experiments>
</comment>
<comment type="interaction">
    <interactant intactId="EBI-593303">
        <id>P78362</id>
    </interactant>
    <interactant intactId="EBI-750020">
        <id>P49760</id>
        <label>CLK2</label>
    </interactant>
    <organismsDiffer>false</organismsDiffer>
    <experiments>3</experiments>
</comment>
<comment type="interaction">
    <interactant intactId="EBI-593303">
        <id>P78362</id>
    </interactant>
    <interactant intactId="EBI-745579">
        <id>P49761</id>
        <label>CLK3</label>
    </interactant>
    <organismsDiffer>false</organismsDiffer>
    <experiments>7</experiments>
</comment>
<comment type="interaction">
    <interactant intactId="EBI-593303">
        <id>P78362</id>
    </interactant>
    <interactant intactId="EBI-945751">
        <id>P38432</id>
        <label>COIL</label>
    </interactant>
    <organismsDiffer>false</organismsDiffer>
    <experiments>3</experiments>
</comment>
<comment type="interaction">
    <interactant intactId="EBI-593303">
        <id>P78362</id>
    </interactant>
    <interactant intactId="EBI-357942">
        <id>Q9NR30</id>
        <label>DDX21</label>
    </interactant>
    <organismsDiffer>false</organismsDiffer>
    <experiments>3</experiments>
</comment>
<comment type="interaction">
    <interactant intactId="EBI-593303">
        <id>P78362</id>
    </interactant>
    <interactant intactId="EBI-2555356">
        <id>Q7L014</id>
        <label>DDX46</label>
    </interactant>
    <organismsDiffer>false</organismsDiffer>
    <experiments>4</experiments>
</comment>
<comment type="interaction">
    <interactant intactId="EBI-593303">
        <id>P78362</id>
    </interactant>
    <interactant intactId="EBI-351257">
        <id>P26196</id>
        <label>DDX6</label>
    </interactant>
    <organismsDiffer>false</organismsDiffer>
    <experiments>2</experiments>
</comment>
<comment type="interaction">
    <interactant intactId="EBI-593303">
        <id>P78362</id>
    </interactant>
    <interactant intactId="EBI-2511477">
        <id>Q14562</id>
        <label>DHX8</label>
    </interactant>
    <organismsDiffer>false</organismsDiffer>
    <experiments>2</experiments>
</comment>
<comment type="interaction">
    <interactant intactId="EBI-593303">
        <id>P78362</id>
    </interactant>
    <interactant intactId="EBI-11022345">
        <id>P51114-2</id>
        <label>FXR1</label>
    </interactant>
    <organismsDiffer>false</organismsDiffer>
    <experiments>3</experiments>
</comment>
<comment type="interaction">
    <interactant intactId="EBI-593303">
        <id>P78362</id>
    </interactant>
    <interactant intactId="EBI-740459">
        <id>P51116</id>
        <label>FXR2</label>
    </interactant>
    <organismsDiffer>false</organismsDiffer>
    <experiments>4</experiments>
</comment>
<comment type="interaction">
    <interactant intactId="EBI-593303">
        <id>P78362</id>
    </interactant>
    <interactant intactId="EBI-11173743">
        <id>O60741</id>
        <label>HCN1</label>
    </interactant>
    <organismsDiffer>false</organismsDiffer>
    <experiments>3</experiments>
</comment>
<comment type="interaction">
    <interactant intactId="EBI-593303">
        <id>P78362</id>
    </interactant>
    <interactant intactId="EBI-357966">
        <id>P07910</id>
        <label>HNRNPC</label>
    </interactant>
    <organismsDiffer>false</organismsDiffer>
    <experiments>2</experiments>
</comment>
<comment type="interaction">
    <interactant intactId="EBI-593303">
        <id>P78362</id>
    </interactant>
    <interactant intactId="EBI-741308">
        <id>P17509</id>
        <label>HOXB6</label>
    </interactant>
    <organismsDiffer>false</organismsDiffer>
    <experiments>3</experiments>
</comment>
<comment type="interaction">
    <interactant intactId="EBI-593303">
        <id>P78362</id>
    </interactant>
    <interactant intactId="EBI-473747">
        <id>Q9NQ29</id>
        <label>LUC7L</label>
    </interactant>
    <organismsDiffer>false</organismsDiffer>
    <experiments>6</experiments>
</comment>
<comment type="interaction">
    <interactant intactId="EBI-593303">
        <id>P78362</id>
    </interactant>
    <interactant intactId="EBI-352851">
        <id>Q9Y383</id>
        <label>LUC7L2</label>
    </interactant>
    <organismsDiffer>false</organismsDiffer>
    <experiments>4</experiments>
</comment>
<comment type="interaction">
    <interactant intactId="EBI-593303">
        <id>P78362</id>
    </interactant>
    <interactant intactId="EBI-10198848">
        <id>Q9P127</id>
        <label>LUZP4</label>
    </interactant>
    <organismsDiffer>false</organismsDiffer>
    <experiments>3</experiments>
</comment>
<comment type="interaction">
    <interactant intactId="EBI-593303">
        <id>P78362</id>
    </interactant>
    <interactant intactId="EBI-742459">
        <id>Q9BU76</id>
        <label>MMTAG2</label>
    </interactant>
    <organismsDiffer>false</organismsDiffer>
    <experiments>3</experiments>
</comment>
<comment type="interaction">
    <interactant intactId="EBI-593303">
        <id>P78362</id>
    </interactant>
    <interactant intactId="EBI-2685618">
        <id>Q5C9Z4</id>
        <label>NOM1</label>
    </interactant>
    <organismsDiffer>false</organismsDiffer>
    <experiments>3</experiments>
</comment>
<comment type="interaction">
    <interactant intactId="EBI-593303">
        <id>P78362</id>
    </interactant>
    <interactant intactId="EBI-5464397">
        <id>Q9H0G5</id>
        <label>NSRP1</label>
    </interactant>
    <organismsDiffer>false</organismsDiffer>
    <experiments>2</experiments>
</comment>
<comment type="interaction">
    <interactant intactId="EBI-593303">
        <id>P78362</id>
    </interactant>
    <interactant intactId="EBI-715374">
        <id>Q8NAV1</id>
        <label>PRPF38A</label>
    </interactant>
    <organismsDiffer>false</organismsDiffer>
    <experiments>7</experiments>
</comment>
<comment type="interaction">
    <interactant intactId="EBI-593303">
        <id>P78362</id>
    </interactant>
    <interactant intactId="EBI-12754095">
        <id>P86480</id>
        <label>PRR20D</label>
    </interactant>
    <organismsDiffer>false</organismsDiffer>
    <experiments>3</experiments>
</comment>
<comment type="interaction">
    <interactant intactId="EBI-593303">
        <id>P78362</id>
    </interactant>
    <interactant intactId="EBI-780319">
        <id>Q86U06</id>
        <label>RBM23</label>
    </interactant>
    <organismsDiffer>false</organismsDiffer>
    <experiments>3</experiments>
</comment>
<comment type="interaction">
    <interactant intactId="EBI-593303">
        <id>P78362</id>
    </interactant>
    <interactant intactId="EBI-395290">
        <id>Q14498</id>
        <label>RBM39</label>
    </interactant>
    <organismsDiffer>false</organismsDiffer>
    <experiments>12</experiments>
</comment>
<comment type="interaction">
    <interactant intactId="EBI-593303">
        <id>P78362</id>
    </interactant>
    <interactant intactId="EBI-447231">
        <id>Q9Y5S9</id>
        <label>RBM8A</label>
    </interactant>
    <organismsDiffer>false</organismsDiffer>
    <experiments>2</experiments>
</comment>
<comment type="interaction">
    <interactant intactId="EBI-593303">
        <id>P78362</id>
    </interactant>
    <interactant intactId="EBI-1043236">
        <id>Q86UR5</id>
        <label>RIMS1</label>
    </interactant>
    <organismsDiffer>false</organismsDiffer>
    <experiments>3</experiments>
</comment>
<comment type="interaction">
    <interactant intactId="EBI-593303">
        <id>P78362</id>
    </interactant>
    <interactant intactId="EBI-10176640">
        <id>D3DU92</id>
        <label>rnps1</label>
    </interactant>
    <organismsDiffer>false</organismsDiffer>
    <experiments>3</experiments>
</comment>
<comment type="interaction">
    <interactant intactId="EBI-593303">
        <id>P78362</id>
    </interactant>
    <interactant intactId="EBI-395959">
        <id>Q15287</id>
        <label>RNPS1</label>
    </interactant>
    <organismsDiffer>false</organismsDiffer>
    <experiments>7</experiments>
</comment>
<comment type="interaction">
    <interactant intactId="EBI-593303">
        <id>P78362</id>
    </interactant>
    <interactant intactId="EBI-712189">
        <id>Q96IZ7</id>
        <label>RSRC1</label>
    </interactant>
    <organismsDiffer>false</organismsDiffer>
    <experiments>2</experiments>
</comment>
<comment type="interaction">
    <interactant intactId="EBI-593303">
        <id>P78362</id>
    </interactant>
    <interactant intactId="EBI-953753">
        <id>Q7L4I2</id>
        <label>RSRC2</label>
    </interactant>
    <organismsDiffer>false</organismsDiffer>
    <experiments>2</experiments>
</comment>
<comment type="interaction">
    <interactant intactId="EBI-593303">
        <id>P78362</id>
    </interactant>
    <interactant intactId="EBI-749336">
        <id>Q8TAD8</id>
        <label>SNIP1</label>
    </interactant>
    <organismsDiffer>false</organismsDiffer>
    <experiments>4</experiments>
</comment>
<comment type="interaction">
    <interactant intactId="EBI-593303">
        <id>P78362</id>
    </interactant>
    <interactant intactId="EBI-2512550">
        <id>Q8WVK2</id>
        <label>SNRNP27</label>
    </interactant>
    <organismsDiffer>false</organismsDiffer>
    <experiments>5</experiments>
</comment>
<comment type="interaction">
    <interactant intactId="EBI-593303">
        <id>P78362</id>
    </interactant>
    <interactant intactId="EBI-1049228">
        <id>P08621</id>
        <label>SNRNP70</label>
    </interactant>
    <organismsDiffer>false</organismsDiffer>
    <experiments>6</experiments>
</comment>
<comment type="interaction">
    <interactant intactId="EBI-593303">
        <id>P78362</id>
    </interactant>
    <interactant intactId="EBI-1044237">
        <id>Q8WXA9</id>
        <label>SREK1</label>
    </interactant>
    <organismsDiffer>false</organismsDiffer>
    <experiments>3</experiments>
</comment>
<comment type="interaction">
    <interactant intactId="EBI-593303">
        <id>P78362</id>
    </interactant>
    <interactant intactId="EBI-1055880">
        <id>Q8IYB3</id>
        <label>SRRM1</label>
    </interactant>
    <organismsDiffer>false</organismsDiffer>
    <experiments>4</experiments>
</comment>
<comment type="interaction">
    <interactant intactId="EBI-593303">
        <id>P78362</id>
    </interactant>
    <interactant intactId="EBI-398920">
        <id>Q07955</id>
        <label>SRSF1</label>
    </interactant>
    <organismsDiffer>false</organismsDiffer>
    <experiments>3</experiments>
</comment>
<comment type="interaction">
    <interactant intactId="EBI-593303">
        <id>P78362</id>
    </interactant>
    <interactant intactId="EBI-353655">
        <id>O75494</id>
        <label>SRSF10</label>
    </interactant>
    <organismsDiffer>false</organismsDiffer>
    <experiments>3</experiments>
</comment>
<comment type="interaction">
    <interactant intactId="EBI-593303">
        <id>P78362</id>
    </interactant>
    <interactant intactId="EBI-11975029">
        <id>Q05519-2</id>
        <label>SRSF11</label>
    </interactant>
    <organismsDiffer>false</organismsDiffer>
    <experiments>3</experiments>
</comment>
<comment type="interaction">
    <interactant intactId="EBI-593303">
        <id>P78362</id>
    </interactant>
    <interactant intactId="EBI-5278477">
        <id>Q8WXF0</id>
        <label>SRSF12</label>
    </interactant>
    <organismsDiffer>false</organismsDiffer>
    <experiments>2</experiments>
</comment>
<comment type="interaction">
    <interactant intactId="EBI-593303">
        <id>P78362</id>
    </interactant>
    <interactant intactId="EBI-372557">
        <id>P84103</id>
        <label>SRSF3</label>
    </interactant>
    <organismsDiffer>false</organismsDiffer>
    <experiments>2</experiments>
</comment>
<comment type="interaction">
    <interactant intactId="EBI-593303">
        <id>P78362</id>
    </interactant>
    <interactant intactId="EBI-720503">
        <id>Q13243</id>
        <label>SRSF5</label>
    </interactant>
    <organismsDiffer>false</organismsDiffer>
    <experiments>4</experiments>
</comment>
<comment type="interaction">
    <interactant intactId="EBI-593303">
        <id>P78362</id>
    </interactant>
    <interactant intactId="EBI-398885">
        <id>Q16629</id>
        <label>SRSF7</label>
    </interactant>
    <organismsDiffer>false</organismsDiffer>
    <experiments>3</experiments>
</comment>
<comment type="interaction">
    <interactant intactId="EBI-593303">
        <id>P78362</id>
    </interactant>
    <interactant intactId="EBI-6380719">
        <id>Q9BRL6</id>
        <label>SRSF8</label>
    </interactant>
    <organismsDiffer>false</organismsDiffer>
    <experiments>3</experiments>
</comment>
<comment type="interaction">
    <interactant intactId="EBI-593303">
        <id>P78362</id>
    </interactant>
    <interactant intactId="EBI-10976394">
        <id>Q9BRL6-2</id>
        <label>SRSF8</label>
    </interactant>
    <organismsDiffer>false</organismsDiffer>
    <experiments>3</experiments>
</comment>
<comment type="interaction">
    <interactant intactId="EBI-593303">
        <id>P78362</id>
    </interactant>
    <interactant intactId="EBI-396105">
        <id>Q13428</id>
        <label>TCOF1</label>
    </interactant>
    <organismsDiffer>false</organismsDiffer>
    <experiments>2</experiments>
</comment>
<comment type="interaction">
    <interactant intactId="EBI-593303">
        <id>P78362</id>
    </interactant>
    <interactant intactId="EBI-717810">
        <id>Q08117</id>
        <label>TLE5</label>
    </interactant>
    <organismsDiffer>false</organismsDiffer>
    <experiments>3</experiments>
</comment>
<comment type="interaction">
    <interactant intactId="EBI-593303">
        <id>P78362</id>
    </interactant>
    <interactant intactId="EBI-2685506">
        <id>Q13595</id>
        <label>TRA2A</label>
    </interactant>
    <organismsDiffer>false</organismsDiffer>
    <experiments>3</experiments>
</comment>
<comment type="interaction">
    <interactant intactId="EBI-593303">
        <id>P78362</id>
    </interactant>
    <interactant intactId="EBI-725485">
        <id>P62995</id>
        <label>TRA2B</label>
    </interactant>
    <organismsDiffer>false</organismsDiffer>
    <experiments>5</experiments>
</comment>
<comment type="interaction">
    <interactant intactId="EBI-593303">
        <id>P78362</id>
    </interactant>
    <interactant intactId="EBI-632461">
        <id>Q01081</id>
        <label>U2AF1</label>
    </interactant>
    <organismsDiffer>false</organismsDiffer>
    <experiments>8</experiments>
</comment>
<comment type="interaction">
    <interactant intactId="EBI-593303">
        <id>P78362</id>
    </interactant>
    <interactant intactId="EBI-10176676">
        <id>Q01081-2</id>
        <label>U2AF1</label>
    </interactant>
    <organismsDiffer>false</organismsDiffer>
    <experiments>3</experiments>
</comment>
<comment type="interaction">
    <interactant intactId="EBI-593303">
        <id>P78362</id>
    </interactant>
    <interactant intactId="EBI-742339">
        <id>P26368</id>
        <label>U2AF2</label>
    </interactant>
    <organismsDiffer>false</organismsDiffer>
    <experiments>8</experiments>
</comment>
<comment type="interaction">
    <interactant intactId="EBI-593303">
        <id>P78362</id>
    </interactant>
    <interactant intactId="EBI-11097439">
        <id>P26368-2</id>
        <label>U2AF2</label>
    </interactant>
    <organismsDiffer>false</organismsDiffer>
    <experiments>3</experiments>
</comment>
<comment type="interaction">
    <interactant intactId="EBI-593303">
        <id>P78362</id>
    </interactant>
    <interactant intactId="EBI-2849854">
        <id>Q96MU7</id>
        <label>YTHDC1</label>
    </interactant>
    <organismsDiffer>false</organismsDiffer>
    <experiments>5</experiments>
</comment>
<comment type="interaction">
    <interactant intactId="EBI-593303">
        <id>P78362</id>
    </interactant>
    <interactant intactId="EBI-359815">
        <id>P31946</id>
        <label>YWHAB</label>
    </interactant>
    <organismsDiffer>false</organismsDiffer>
    <experiments>2</experiments>
</comment>
<comment type="interaction">
    <interactant intactId="EBI-593303">
        <id>P78362</id>
    </interactant>
    <interactant intactId="EBI-6657923">
        <id>Q15696</id>
        <label>ZRSR2</label>
    </interactant>
    <organismsDiffer>false</organismsDiffer>
    <experiments>8</experiments>
</comment>
<comment type="interaction">
    <interactant intactId="EBI-593303">
        <id>P78362</id>
    </interactant>
    <interactant intactId="EBI-1210440">
        <id>O43309</id>
        <label>ZSCAN12</label>
    </interactant>
    <organismsDiffer>false</organismsDiffer>
    <experiments>3</experiments>
</comment>
<comment type="interaction">
    <interactant intactId="EBI-593303">
        <id>P78362</id>
    </interactant>
    <interactant intactId="EBI-751531">
        <id>O15535</id>
        <label>ZSCAN9</label>
    </interactant>
    <organismsDiffer>false</organismsDiffer>
    <experiments>6</experiments>
</comment>
<comment type="interaction">
    <interactant intactId="EBI-593303">
        <id>P78362</id>
    </interactant>
    <interactant intactId="EBI-25475856">
        <id>P0DTC9</id>
        <label>N</label>
    </interactant>
    <organismsDiffer>true</organismsDiffer>
    <experiments>2</experiments>
</comment>
<comment type="subcellular location">
    <subcellularLocation>
        <location evidence="14 15 17 18">Cytoplasm</location>
    </subcellularLocation>
    <subcellularLocation>
        <location evidence="15 17 18">Nucleus</location>
        <location evidence="15 17 18">Nucleoplasm</location>
    </subcellularLocation>
    <subcellularLocation>
        <location evidence="17 18">Nucleus speckle</location>
    </subcellularLocation>
    <subcellularLocation>
        <location evidence="17">Chromosome</location>
    </subcellularLocation>
    <text evidence="13 14 15 17">Shuttles between the nucleus and the cytoplasm (PubMed:19592491, PubMed:21056976, PubMed:21157427). KAT5/TIP60 inhibits its nuclear translocation (PubMed:21157427). Phosphorylation at Thr-492 by PKB/AKT1 promotes nuclear translocation (PubMed:19592491). Preferentially localizes across the entire gene coding region (PubMed:28076779). During transcription, accumulates at chromatin loci where unscheduled R-loops form and colocalizes with paused 'Ser-5'-phosphorylated POLR2A/RNA polymerase II and helicase DDX23 (PubMed:28076779).</text>
</comment>
<comment type="alternative products">
    <event type="alternative splicing"/>
    <isoform>
        <id>P78362-1</id>
        <name>1</name>
        <sequence type="displayed"/>
    </isoform>
    <isoform>
        <id>P78362-2</id>
        <name>2</name>
        <sequence type="described" ref="VSP_039386"/>
    </isoform>
</comment>
<comment type="tissue specificity">
    <text evidence="18">Highly expressed in brain, moderately expressed in heart and skeletal muscle and at low levels in lung, liver, and kidney.</text>
</comment>
<comment type="PTM">
    <text evidence="13">Phosphorylation at Thr-492 by PKB/AKT1 enhances its stimulatory activity in triggering cyclin-D1 (CCND1) expression and promoting apoptosis in neurons, which can be blocked by YWHAB. It also enhances its protein kinase activity toward ACIN1 and SRSF2, promotes its nuclear translocation and prevents its proteolytic cleavage.</text>
</comment>
<comment type="PTM">
    <text evidence="14">Proteolytically cleaved at Asp-139 and Asp-403 by caspase-3 during apoptotic cell death. Cleavage at Asp-139 which is the major site of cleavage, produces a small N-terminal fragment that translocates into nucleus and promotes VP16-induced apoptosis.</text>
</comment>
<comment type="similarity">
    <text evidence="20">Belongs to the protein kinase superfamily. CMGC Ser/Thr protein kinase family.</text>
</comment>
<comment type="sequence caution" evidence="20">
    <conflict type="miscellaneous discrepancy">
        <sequence resource="EMBL-CDS" id="AAQ63886"/>
    </conflict>
    <text>The cDNA appears to contain a duplicated region.</text>
</comment>
<feature type="chain" id="PRO_0000086677" description="SRSF protein kinase 2">
    <location>
        <begin position="1"/>
        <end position="688"/>
    </location>
</feature>
<feature type="chain" id="PRO_0000414751" description="SRSF protein kinase 2 N-terminal">
    <location>
        <begin position="1"/>
        <end position="139"/>
    </location>
</feature>
<feature type="chain" id="PRO_0000414752" description="SRSF protein kinase 2 C-terminal">
    <location>
        <begin position="140"/>
        <end position="688"/>
    </location>
</feature>
<feature type="domain" description="Protein kinase" evidence="5">
    <location>
        <begin position="81"/>
        <end position="684"/>
    </location>
</feature>
<feature type="region of interest" description="Disordered" evidence="7">
    <location>
        <begin position="1"/>
        <end position="65"/>
    </location>
</feature>
<feature type="region of interest" description="Disordered" evidence="7">
    <location>
        <begin position="239"/>
        <end position="277"/>
    </location>
</feature>
<feature type="region of interest" description="Disordered" evidence="7">
    <location>
        <begin position="329"/>
        <end position="444"/>
    </location>
</feature>
<feature type="region of interest" description="Disordered" evidence="7">
    <location>
        <begin position="469"/>
        <end position="501"/>
    </location>
</feature>
<feature type="compositionally biased region" description="Pro residues" evidence="7">
    <location>
        <begin position="22"/>
        <end position="43"/>
    </location>
</feature>
<feature type="compositionally biased region" description="Acidic residues" evidence="7">
    <location>
        <begin position="44"/>
        <end position="61"/>
    </location>
</feature>
<feature type="compositionally biased region" description="Basic residues" evidence="7">
    <location>
        <begin position="265"/>
        <end position="277"/>
    </location>
</feature>
<feature type="compositionally biased region" description="Acidic residues" evidence="7">
    <location>
        <begin position="397"/>
        <end position="421"/>
    </location>
</feature>
<feature type="compositionally biased region" description="Polar residues" evidence="7">
    <location>
        <begin position="423"/>
        <end position="433"/>
    </location>
</feature>
<feature type="active site" description="Proton acceptor" evidence="5 6">
    <location>
        <position position="214"/>
    </location>
</feature>
<feature type="binding site" evidence="4 5">
    <location>
        <begin position="87"/>
        <end position="95"/>
    </location>
    <ligand>
        <name>ATP</name>
        <dbReference type="ChEBI" id="CHEBI:30616"/>
    </ligand>
</feature>
<feature type="binding site" evidence="4 5">
    <location>
        <position position="110"/>
    </location>
    <ligand>
        <name>ATP</name>
        <dbReference type="ChEBI" id="CHEBI:30616"/>
    </ligand>
</feature>
<feature type="site" description="Cleavage; by caspase-3" evidence="14">
    <location>
        <begin position="139"/>
        <end position="140"/>
    </location>
</feature>
<feature type="site" description="Cleavage; by caspase-3" evidence="14">
    <location>
        <begin position="403"/>
        <end position="404"/>
    </location>
</feature>
<feature type="modified residue" description="Phosphoserine" evidence="33">
    <location>
        <position position="52"/>
    </location>
</feature>
<feature type="modified residue" description="Phosphoserine" evidence="29 30 33">
    <location>
        <position position="380"/>
    </location>
</feature>
<feature type="modified residue" description="Phosphoserine" evidence="2">
    <location>
        <position position="475"/>
    </location>
</feature>
<feature type="modified residue" description="Phosphothreonine" evidence="2">
    <location>
        <position position="478"/>
    </location>
</feature>
<feature type="modified residue" description="Phosphoserine" evidence="2">
    <location>
        <position position="484"/>
    </location>
</feature>
<feature type="modified residue" description="Phosphoserine" evidence="2">
    <location>
        <position position="486"/>
    </location>
</feature>
<feature type="modified residue" description="Phosphoserine" evidence="2">
    <location>
        <position position="490"/>
    </location>
</feature>
<feature type="modified residue" description="Phosphothreonine; by PKB/AKT1" evidence="13">
    <location>
        <position position="492"/>
    </location>
</feature>
<feature type="modified residue" description="Phosphoserine" evidence="28 30 31 32">
    <location>
        <position position="494"/>
    </location>
</feature>
<feature type="modified residue" description="Phosphoserine" evidence="27 28 30 31 33">
    <location>
        <position position="497"/>
    </location>
</feature>
<feature type="modified residue" description="Phosphoserine; by CK2" evidence="1">
    <location>
        <position position="588"/>
    </location>
</feature>
<feature type="splice variant" id="VSP_039386" description="In isoform 2." evidence="19">
    <original>MSVNSEKSSSSER</original>
    <variation>MSSRKVLAIQARKRRPKREKHPKK</variation>
    <location>
        <begin position="1"/>
        <end position="13"/>
    </location>
</feature>
<feature type="sequence variant" id="VAR_041114" description="In dbSNP:rs34699980." evidence="10">
    <original>P</original>
    <variation>L</variation>
    <location>
        <position position="43"/>
    </location>
</feature>
<feature type="sequence variant" id="VAR_041115" description="In a glioblastoma multiforme sample; somatic mutation." evidence="10">
    <original>G</original>
    <variation>D</variation>
    <location>
        <position position="243"/>
    </location>
</feature>
<feature type="sequence variant" id="VAR_041116" description="In dbSNP:rs55743527." evidence="10">
    <original>T</original>
    <variation>P</variation>
    <location>
        <position position="426"/>
    </location>
</feature>
<feature type="sequence variant" id="VAR_041117" description="In dbSNP:rs56112661." evidence="10">
    <original>S</original>
    <variation>F</variation>
    <location>
        <position position="486"/>
    </location>
</feature>
<feature type="sequence variant" id="VAR_041118" description="In dbSNP:rs56017595." evidence="10">
    <original>P</original>
    <variation>T</variation>
    <location>
        <position position="515"/>
    </location>
</feature>
<feature type="sequence variant" id="VAR_060390" description="In dbSNP:rs1050413.">
    <original>S</original>
    <variation>N</variation>
    <location>
        <position position="608"/>
    </location>
</feature>
<feature type="sequence variant" id="VAR_057111" description="In dbSNP:rs1050418.">
    <original>L</original>
    <variation>I</variation>
    <location>
        <position position="615"/>
    </location>
</feature>
<feature type="sequence conflict" description="In Ref. 4; AAH68547." evidence="20" ref="4">
    <original>P</original>
    <variation>R</variation>
    <location>
        <position position="137"/>
    </location>
</feature>
<feature type="sequence conflict" description="In Ref. 1; AAC05299." evidence="20" ref="1">
    <original>AT</original>
    <variation>P</variation>
    <location>
        <begin position="236"/>
        <end position="237"/>
    </location>
</feature>
<feature type="sequence conflict" description="In Ref. 1; AAC05299." evidence="20" ref="1">
    <original>A</original>
    <variation>R</variation>
    <location>
        <position position="521"/>
    </location>
</feature>
<feature type="sequence conflict" description="In Ref. 2; AAC29141." evidence="20" ref="2">
    <original>H</original>
    <variation>L</variation>
    <location>
        <position position="601"/>
    </location>
</feature>
<feature type="sequence conflict" description="In Ref. 2; AAC29141." evidence="20" ref="2">
    <original>SI</original>
    <variation>KV</variation>
    <location>
        <begin position="608"/>
        <end position="609"/>
    </location>
</feature>
<feature type="sequence conflict" description="In Ref. 2; AAC29141." evidence="20" ref="2">
    <original>HFALS</original>
    <variation>KYAML</variation>
    <location>
        <begin position="612"/>
        <end position="616"/>
    </location>
</feature>
<feature type="sequence conflict" description="In Ref. 2; AAC29141." evidence="20" ref="2">
    <original>R</original>
    <variation>K</variation>
    <location>
        <position position="621"/>
    </location>
</feature>
<feature type="sequence conflict" description="In Ref. 2; AAC29141." evidence="20" ref="2">
    <original>NRR</original>
    <variation>TRK</variation>
    <location>
        <begin position="625"/>
        <end position="627"/>
    </location>
</feature>
<feature type="sequence conflict" description="In Ref. 4; AAH68547." evidence="20" ref="4">
    <original>S</original>
    <variation>G</variation>
    <location>
        <position position="640"/>
    </location>
</feature>
<feature type="sequence conflict" description="In Ref. 1; AAC05299." evidence="20" ref="1">
    <location>
        <position position="681"/>
    </location>
</feature>
<feature type="turn" evidence="34">
    <location>
        <begin position="78"/>
        <end position="80"/>
    </location>
</feature>
<feature type="strand" evidence="34">
    <location>
        <begin position="81"/>
        <end position="89"/>
    </location>
</feature>
<feature type="strand" evidence="34">
    <location>
        <begin position="91"/>
        <end position="100"/>
    </location>
</feature>
<feature type="turn" evidence="34">
    <location>
        <begin position="101"/>
        <end position="104"/>
    </location>
</feature>
<feature type="strand" evidence="34">
    <location>
        <begin position="105"/>
        <end position="112"/>
    </location>
</feature>
<feature type="helix" evidence="34">
    <location>
        <begin position="116"/>
        <end position="134"/>
    </location>
</feature>
<feature type="helix" evidence="34">
    <location>
        <begin position="140"/>
        <end position="144"/>
    </location>
</feature>
<feature type="strand" evidence="34">
    <location>
        <begin position="150"/>
        <end position="154"/>
    </location>
</feature>
<feature type="strand" evidence="34">
    <location>
        <begin position="161"/>
        <end position="166"/>
    </location>
</feature>
<feature type="helix" evidence="34">
    <location>
        <begin position="173"/>
        <end position="179"/>
    </location>
</feature>
<feature type="turn" evidence="34">
    <location>
        <begin position="180"/>
        <end position="182"/>
    </location>
</feature>
<feature type="helix" evidence="34">
    <location>
        <begin position="187"/>
        <end position="206"/>
    </location>
</feature>
<feature type="helix" evidence="34">
    <location>
        <begin position="217"/>
        <end position="219"/>
    </location>
</feature>
<feature type="strand" evidence="34">
    <location>
        <begin position="220"/>
        <end position="222"/>
    </location>
</feature>
<feature type="helix" evidence="34">
    <location>
        <begin position="226"/>
        <end position="234"/>
    </location>
</feature>
<feature type="helix" evidence="34">
    <location>
        <begin position="518"/>
        <end position="523"/>
    </location>
</feature>
<feature type="strand" evidence="34">
    <location>
        <begin position="526"/>
        <end position="528"/>
    </location>
</feature>
<feature type="helix" evidence="34">
    <location>
        <begin position="531"/>
        <end position="533"/>
    </location>
</feature>
<feature type="helix" evidence="34">
    <location>
        <begin position="548"/>
        <end position="550"/>
    </location>
</feature>
<feature type="helix" evidence="34">
    <location>
        <begin position="553"/>
        <end position="557"/>
    </location>
</feature>
<feature type="helix" evidence="34">
    <location>
        <begin position="564"/>
        <end position="579"/>
    </location>
</feature>
<feature type="helix" evidence="34">
    <location>
        <begin position="594"/>
        <end position="606"/>
    </location>
</feature>
<feature type="helix" evidence="34">
    <location>
        <begin position="611"/>
        <end position="614"/>
    </location>
</feature>
<feature type="helix" evidence="34">
    <location>
        <begin position="620"/>
        <end position="623"/>
    </location>
</feature>
<feature type="strand" evidence="34">
    <location>
        <begin position="630"/>
        <end position="632"/>
    </location>
</feature>
<feature type="helix" evidence="34">
    <location>
        <begin position="641"/>
        <end position="647"/>
    </location>
</feature>
<feature type="helix" evidence="34">
    <location>
        <begin position="653"/>
        <end position="663"/>
    </location>
</feature>
<feature type="helix" evidence="34">
    <location>
        <begin position="664"/>
        <end position="667"/>
    </location>
</feature>
<feature type="helix" evidence="34">
    <location>
        <begin position="671"/>
        <end position="673"/>
    </location>
</feature>
<feature type="helix" evidence="34">
    <location>
        <begin position="677"/>
        <end position="681"/>
    </location>
</feature>
<feature type="helix" evidence="34">
    <location>
        <begin position="684"/>
        <end position="686"/>
    </location>
</feature>
<sequence length="688" mass="77527">MSVNSEKSSSSERPEPQQKAPLVPPPPPPPPPPPPPLPDPTPPEPEEEILGSDDEEQEDPADYCKGGYHPVKIGDLFNGRYHVIRKLGWGHFSTVWLCWDMQGKRFVAMKVVKSAQHYTETALDEIKLLKCVRESDPSDPNKDMVVQLIDDFKISGMNGIHVCMVFEVLGHHLLKWIIKSNYQGLPVRCVKSIIRQVLQGLDYLHSKCKIIHTDIKPENILMCVDDAYVRRMAAEATEWQKAGAPPPSGSAVSTAPQQKPIGKISKNKKKKLKKKQKRQAELLEKRLQEIEELEREAERKIIEENITSAAPSNDQDGEYCPEVKLKTTGLEEAAEAETAKDNGEAEDQEEKEDAEKENIEKDEDDVDQELANIDPTWIESPKTNGHIENGPFSLEQQLDDEDDDEEDCPNPEEYNLDEPNAESDYTYSSSYEQFNGELPNGRHKIPESQFPEFSTSLFSGSLEPVACGSVLSEGSPLTEQEESSPSHDRSRTVSASSTGDLPKAKTRAADLLVNPLDPRNADKIRVKIADLGNACWVHKHFTEDIQTRQYRSIEVLIGAGYSTPADIWSTACMAFELATGDYLFEPHSGEDYSRDEDHIAHIIELLGSIPRHFALSGKYSREFFNRRGELRHITKLKPWSLFDVLVEKYGWPHEDAAQFTDFLIPMLEMVPEKRASAGECLRHPWLNS</sequence>